<organism>
    <name type="scientific">Mus musculus</name>
    <name type="common">Mouse</name>
    <dbReference type="NCBI Taxonomy" id="10090"/>
    <lineage>
        <taxon>Eukaryota</taxon>
        <taxon>Metazoa</taxon>
        <taxon>Chordata</taxon>
        <taxon>Craniata</taxon>
        <taxon>Vertebrata</taxon>
        <taxon>Euteleostomi</taxon>
        <taxon>Mammalia</taxon>
        <taxon>Eutheria</taxon>
        <taxon>Euarchontoglires</taxon>
        <taxon>Glires</taxon>
        <taxon>Rodentia</taxon>
        <taxon>Myomorpha</taxon>
        <taxon>Muroidea</taxon>
        <taxon>Muridae</taxon>
        <taxon>Murinae</taxon>
        <taxon>Mus</taxon>
        <taxon>Mus</taxon>
    </lineage>
</organism>
<evidence type="ECO:0000250" key="1">
    <source>
        <dbReference type="UniProtKB" id="A6NH21"/>
    </source>
</evidence>
<evidence type="ECO:0000255" key="2"/>
<evidence type="ECO:0000305" key="3"/>
<sequence length="492" mass="53907">MMGAKVVTGRSTTQGLAQQHGGVSNVVETPFNQASCCGPVSWTSGCHSLTESRCSRLLYILLHVGASAICCLLLSKTVVERVWGKAHGIQMPSVLCAHLFGSSDCPVLSGSGAVYRVCAGTATFHLLQAVLLVRLHSPTNPRAQLHNSFWSLKLLFLLGLCVVAFCIPDEDLFPAWHYIGICGGFTFILLQLVLITAFAQSWNKNWQTGAAQDCSWLLGVSLATLGFYSMAGVGAVLLFHQYTHPDGCLLNKMLLSLHLCFCGLLSLLSIAPCIRRKQPNSGLLQASIISCYIMYLTFSALSSRPPETITFQGQNHTLCLPGRNKMEPQIPDTSVAVFSAGIMYACVLFACNEASYLAELFGPLWIIKVYKYEFQKPSVCFCCPQTVEPEDGQRSRARSADQETPPAAQVQSQHLSYSYSGFHFAFFLASLYVMVTLTNWFSYEEAELEKTFTKGSWATFWVKVASCWACVLLYLGLLLAPLLAPHSESPPP</sequence>
<proteinExistence type="evidence at transcript level"/>
<accession>Q5XK03</accession>
<accession>Q8C8U1</accession>
<dbReference type="EMBL" id="AK044479">
    <property type="protein sequence ID" value="BAC31945.1"/>
    <property type="status" value="ALT_FRAME"/>
    <property type="molecule type" value="mRNA"/>
</dbReference>
<dbReference type="EMBL" id="AL845466">
    <property type="status" value="NOT_ANNOTATED_CDS"/>
    <property type="molecule type" value="Genomic_DNA"/>
</dbReference>
<dbReference type="EMBL" id="BC083132">
    <property type="protein sequence ID" value="AAH83132.1"/>
    <property type="molecule type" value="mRNA"/>
</dbReference>
<dbReference type="CCDS" id="CCDS16646.1"/>
<dbReference type="RefSeq" id="NP_001020542.1">
    <property type="nucleotide sequence ID" value="NM_001025371.2"/>
</dbReference>
<dbReference type="SMR" id="Q5XK03"/>
<dbReference type="FunCoup" id="Q5XK03">
    <property type="interactions" value="49"/>
</dbReference>
<dbReference type="STRING" id="10090.ENSMUSP00000051261"/>
<dbReference type="PhosphoSitePlus" id="Q5XK03"/>
<dbReference type="PaxDb" id="10090-ENSMUSP00000051261"/>
<dbReference type="Antibodypedia" id="11477">
    <property type="antibodies" value="55 antibodies from 17 providers"/>
</dbReference>
<dbReference type="Ensembl" id="ENSMUST00000056312.10">
    <property type="protein sequence ID" value="ENSMUSP00000051261.4"/>
    <property type="gene ID" value="ENSMUSG00000046110.16"/>
</dbReference>
<dbReference type="GeneID" id="574418"/>
<dbReference type="KEGG" id="mmu:574418"/>
<dbReference type="UCSC" id="uc008lze.1">
    <property type="organism name" value="mouse"/>
</dbReference>
<dbReference type="AGR" id="MGI:2441842"/>
<dbReference type="CTD" id="619189"/>
<dbReference type="MGI" id="MGI:2441842">
    <property type="gene designation" value="Serinc4"/>
</dbReference>
<dbReference type="VEuPathDB" id="HostDB:ENSMUSG00000046110"/>
<dbReference type="eggNOG" id="KOG2592">
    <property type="taxonomic scope" value="Eukaryota"/>
</dbReference>
<dbReference type="GeneTree" id="ENSGT01030000234623"/>
<dbReference type="HOGENOM" id="CLU_029574_5_2_1"/>
<dbReference type="InParanoid" id="Q5XK03"/>
<dbReference type="OMA" id="IHNFWFL"/>
<dbReference type="OrthoDB" id="5963193at2759"/>
<dbReference type="PhylomeDB" id="Q5XK03"/>
<dbReference type="TreeFam" id="TF312881"/>
<dbReference type="Reactome" id="R-MMU-977347">
    <property type="pathway name" value="Serine biosynthesis"/>
</dbReference>
<dbReference type="BioGRID-ORCS" id="574418">
    <property type="hits" value="2 hits in 45 CRISPR screens"/>
</dbReference>
<dbReference type="PRO" id="PR:Q5XK03"/>
<dbReference type="Proteomes" id="UP000000589">
    <property type="component" value="Chromosome 2"/>
</dbReference>
<dbReference type="RNAct" id="Q5XK03">
    <property type="molecule type" value="protein"/>
</dbReference>
<dbReference type="Bgee" id="ENSMUSG00000046110">
    <property type="expression patterns" value="Expressed in retinal neural layer and 69 other cell types or tissues"/>
</dbReference>
<dbReference type="ExpressionAtlas" id="Q5XK03">
    <property type="expression patterns" value="baseline and differential"/>
</dbReference>
<dbReference type="GO" id="GO:0016020">
    <property type="term" value="C:membrane"/>
    <property type="evidence" value="ECO:0007669"/>
    <property type="project" value="UniProtKB-SubCell"/>
</dbReference>
<dbReference type="GO" id="GO:0008654">
    <property type="term" value="P:phospholipid biosynthetic process"/>
    <property type="evidence" value="ECO:0007669"/>
    <property type="project" value="UniProtKB-KW"/>
</dbReference>
<dbReference type="InterPro" id="IPR005016">
    <property type="entry name" value="TDE1/TMS"/>
</dbReference>
<dbReference type="PANTHER" id="PTHR10383">
    <property type="entry name" value="SERINE INCORPORATOR"/>
    <property type="match status" value="1"/>
</dbReference>
<dbReference type="PANTHER" id="PTHR10383:SF5">
    <property type="entry name" value="SERINE INCORPORATOR 4"/>
    <property type="match status" value="1"/>
</dbReference>
<dbReference type="Pfam" id="PF03348">
    <property type="entry name" value="Serinc"/>
    <property type="match status" value="1"/>
</dbReference>
<name>SERC4_MOUSE</name>
<reference key="1">
    <citation type="journal article" date="2005" name="Science">
        <title>The transcriptional landscape of the mammalian genome.</title>
        <authorList>
            <person name="Carninci P."/>
            <person name="Kasukawa T."/>
            <person name="Katayama S."/>
            <person name="Gough J."/>
            <person name="Frith M.C."/>
            <person name="Maeda N."/>
            <person name="Oyama R."/>
            <person name="Ravasi T."/>
            <person name="Lenhard B."/>
            <person name="Wells C."/>
            <person name="Kodzius R."/>
            <person name="Shimokawa K."/>
            <person name="Bajic V.B."/>
            <person name="Brenner S.E."/>
            <person name="Batalov S."/>
            <person name="Forrest A.R."/>
            <person name="Zavolan M."/>
            <person name="Davis M.J."/>
            <person name="Wilming L.G."/>
            <person name="Aidinis V."/>
            <person name="Allen J.E."/>
            <person name="Ambesi-Impiombato A."/>
            <person name="Apweiler R."/>
            <person name="Aturaliya R.N."/>
            <person name="Bailey T.L."/>
            <person name="Bansal M."/>
            <person name="Baxter L."/>
            <person name="Beisel K.W."/>
            <person name="Bersano T."/>
            <person name="Bono H."/>
            <person name="Chalk A.M."/>
            <person name="Chiu K.P."/>
            <person name="Choudhary V."/>
            <person name="Christoffels A."/>
            <person name="Clutterbuck D.R."/>
            <person name="Crowe M.L."/>
            <person name="Dalla E."/>
            <person name="Dalrymple B.P."/>
            <person name="de Bono B."/>
            <person name="Della Gatta G."/>
            <person name="di Bernardo D."/>
            <person name="Down T."/>
            <person name="Engstrom P."/>
            <person name="Fagiolini M."/>
            <person name="Faulkner G."/>
            <person name="Fletcher C.F."/>
            <person name="Fukushima T."/>
            <person name="Furuno M."/>
            <person name="Futaki S."/>
            <person name="Gariboldi M."/>
            <person name="Georgii-Hemming P."/>
            <person name="Gingeras T.R."/>
            <person name="Gojobori T."/>
            <person name="Green R.E."/>
            <person name="Gustincich S."/>
            <person name="Harbers M."/>
            <person name="Hayashi Y."/>
            <person name="Hensch T.K."/>
            <person name="Hirokawa N."/>
            <person name="Hill D."/>
            <person name="Huminiecki L."/>
            <person name="Iacono M."/>
            <person name="Ikeo K."/>
            <person name="Iwama A."/>
            <person name="Ishikawa T."/>
            <person name="Jakt M."/>
            <person name="Kanapin A."/>
            <person name="Katoh M."/>
            <person name="Kawasawa Y."/>
            <person name="Kelso J."/>
            <person name="Kitamura H."/>
            <person name="Kitano H."/>
            <person name="Kollias G."/>
            <person name="Krishnan S.P."/>
            <person name="Kruger A."/>
            <person name="Kummerfeld S.K."/>
            <person name="Kurochkin I.V."/>
            <person name="Lareau L.F."/>
            <person name="Lazarevic D."/>
            <person name="Lipovich L."/>
            <person name="Liu J."/>
            <person name="Liuni S."/>
            <person name="McWilliam S."/>
            <person name="Madan Babu M."/>
            <person name="Madera M."/>
            <person name="Marchionni L."/>
            <person name="Matsuda H."/>
            <person name="Matsuzawa S."/>
            <person name="Miki H."/>
            <person name="Mignone F."/>
            <person name="Miyake S."/>
            <person name="Morris K."/>
            <person name="Mottagui-Tabar S."/>
            <person name="Mulder N."/>
            <person name="Nakano N."/>
            <person name="Nakauchi H."/>
            <person name="Ng P."/>
            <person name="Nilsson R."/>
            <person name="Nishiguchi S."/>
            <person name="Nishikawa S."/>
            <person name="Nori F."/>
            <person name="Ohara O."/>
            <person name="Okazaki Y."/>
            <person name="Orlando V."/>
            <person name="Pang K.C."/>
            <person name="Pavan W.J."/>
            <person name="Pavesi G."/>
            <person name="Pesole G."/>
            <person name="Petrovsky N."/>
            <person name="Piazza S."/>
            <person name="Reed J."/>
            <person name="Reid J.F."/>
            <person name="Ring B.Z."/>
            <person name="Ringwald M."/>
            <person name="Rost B."/>
            <person name="Ruan Y."/>
            <person name="Salzberg S.L."/>
            <person name="Sandelin A."/>
            <person name="Schneider C."/>
            <person name="Schoenbach C."/>
            <person name="Sekiguchi K."/>
            <person name="Semple C.A."/>
            <person name="Seno S."/>
            <person name="Sessa L."/>
            <person name="Sheng Y."/>
            <person name="Shibata Y."/>
            <person name="Shimada H."/>
            <person name="Shimada K."/>
            <person name="Silva D."/>
            <person name="Sinclair B."/>
            <person name="Sperling S."/>
            <person name="Stupka E."/>
            <person name="Sugiura K."/>
            <person name="Sultana R."/>
            <person name="Takenaka Y."/>
            <person name="Taki K."/>
            <person name="Tammoja K."/>
            <person name="Tan S.L."/>
            <person name="Tang S."/>
            <person name="Taylor M.S."/>
            <person name="Tegner J."/>
            <person name="Teichmann S.A."/>
            <person name="Ueda H.R."/>
            <person name="van Nimwegen E."/>
            <person name="Verardo R."/>
            <person name="Wei C.L."/>
            <person name="Yagi K."/>
            <person name="Yamanishi H."/>
            <person name="Zabarovsky E."/>
            <person name="Zhu S."/>
            <person name="Zimmer A."/>
            <person name="Hide W."/>
            <person name="Bult C."/>
            <person name="Grimmond S.M."/>
            <person name="Teasdale R.D."/>
            <person name="Liu E.T."/>
            <person name="Brusic V."/>
            <person name="Quackenbush J."/>
            <person name="Wahlestedt C."/>
            <person name="Mattick J.S."/>
            <person name="Hume D.A."/>
            <person name="Kai C."/>
            <person name="Sasaki D."/>
            <person name="Tomaru Y."/>
            <person name="Fukuda S."/>
            <person name="Kanamori-Katayama M."/>
            <person name="Suzuki M."/>
            <person name="Aoki J."/>
            <person name="Arakawa T."/>
            <person name="Iida J."/>
            <person name="Imamura K."/>
            <person name="Itoh M."/>
            <person name="Kato T."/>
            <person name="Kawaji H."/>
            <person name="Kawagashira N."/>
            <person name="Kawashima T."/>
            <person name="Kojima M."/>
            <person name="Kondo S."/>
            <person name="Konno H."/>
            <person name="Nakano K."/>
            <person name="Ninomiya N."/>
            <person name="Nishio T."/>
            <person name="Okada M."/>
            <person name="Plessy C."/>
            <person name="Shibata K."/>
            <person name="Shiraki T."/>
            <person name="Suzuki S."/>
            <person name="Tagami M."/>
            <person name="Waki K."/>
            <person name="Watahiki A."/>
            <person name="Okamura-Oho Y."/>
            <person name="Suzuki H."/>
            <person name="Kawai J."/>
            <person name="Hayashizaki Y."/>
        </authorList>
    </citation>
    <scope>NUCLEOTIDE SEQUENCE [LARGE SCALE MRNA]</scope>
    <source>
        <strain>C57BL/6J</strain>
        <tissue>Retina</tissue>
    </source>
</reference>
<reference key="2">
    <citation type="journal article" date="2009" name="PLoS Biol.">
        <title>Lineage-specific biology revealed by a finished genome assembly of the mouse.</title>
        <authorList>
            <person name="Church D.M."/>
            <person name="Goodstadt L."/>
            <person name="Hillier L.W."/>
            <person name="Zody M.C."/>
            <person name="Goldstein S."/>
            <person name="She X."/>
            <person name="Bult C.J."/>
            <person name="Agarwala R."/>
            <person name="Cherry J.L."/>
            <person name="DiCuccio M."/>
            <person name="Hlavina W."/>
            <person name="Kapustin Y."/>
            <person name="Meric P."/>
            <person name="Maglott D."/>
            <person name="Birtle Z."/>
            <person name="Marques A.C."/>
            <person name="Graves T."/>
            <person name="Zhou S."/>
            <person name="Teague B."/>
            <person name="Potamousis K."/>
            <person name="Churas C."/>
            <person name="Place M."/>
            <person name="Herschleb J."/>
            <person name="Runnheim R."/>
            <person name="Forrest D."/>
            <person name="Amos-Landgraf J."/>
            <person name="Schwartz D.C."/>
            <person name="Cheng Z."/>
            <person name="Lindblad-Toh K."/>
            <person name="Eichler E.E."/>
            <person name="Ponting C.P."/>
        </authorList>
    </citation>
    <scope>NUCLEOTIDE SEQUENCE [LARGE SCALE GENOMIC DNA]</scope>
    <source>
        <strain>C57BL/6J</strain>
    </source>
</reference>
<reference key="3">
    <citation type="journal article" date="2004" name="Genome Res.">
        <title>The status, quality, and expansion of the NIH full-length cDNA project: the Mammalian Gene Collection (MGC).</title>
        <authorList>
            <consortium name="The MGC Project Team"/>
        </authorList>
    </citation>
    <scope>NUCLEOTIDE SEQUENCE [LARGE SCALE MRNA]</scope>
    <source>
        <tissue>Eye</tissue>
    </source>
</reference>
<keyword id="KW-0444">Lipid biosynthesis</keyword>
<keyword id="KW-0443">Lipid metabolism</keyword>
<keyword id="KW-0472">Membrane</keyword>
<keyword id="KW-0594">Phospholipid biosynthesis</keyword>
<keyword id="KW-1208">Phospholipid metabolism</keyword>
<keyword id="KW-1185">Reference proteome</keyword>
<keyword id="KW-0812">Transmembrane</keyword>
<keyword id="KW-1133">Transmembrane helix</keyword>
<comment type="function">
    <text evidence="1">Incorporates a polar amino acid serine into membranes and facilitates the synthesis of two serine-derived lipids, phosphatidylserine and sphingolipids.</text>
</comment>
<comment type="subcellular location">
    <subcellularLocation>
        <location evidence="3">Membrane</location>
        <topology evidence="3">Multi-pass membrane protein</topology>
    </subcellularLocation>
</comment>
<comment type="similarity">
    <text evidence="3">Belongs to the TDE1 family.</text>
</comment>
<comment type="sequence caution" evidence="3">
    <conflict type="frameshift">
        <sequence resource="EMBL-CDS" id="BAC31945"/>
    </conflict>
</comment>
<gene>
    <name type="primary">Serinc4</name>
</gene>
<protein>
    <recommendedName>
        <fullName>Serine incorporator 4</fullName>
    </recommendedName>
</protein>
<feature type="chain" id="PRO_0000333872" description="Serine incorporator 4">
    <location>
        <begin position="1"/>
        <end position="492"/>
    </location>
</feature>
<feature type="transmembrane region" description="Helical" evidence="2">
    <location>
        <begin position="59"/>
        <end position="79"/>
    </location>
</feature>
<feature type="transmembrane region" description="Helical" evidence="2">
    <location>
        <begin position="113"/>
        <end position="133"/>
    </location>
</feature>
<feature type="transmembrane region" description="Helical" evidence="2">
    <location>
        <begin position="148"/>
        <end position="168"/>
    </location>
</feature>
<feature type="transmembrane region" description="Helical" evidence="2">
    <location>
        <begin position="179"/>
        <end position="199"/>
    </location>
</feature>
<feature type="transmembrane region" description="Helical" evidence="2">
    <location>
        <begin position="219"/>
        <end position="239"/>
    </location>
</feature>
<feature type="transmembrane region" description="Helical" evidence="2">
    <location>
        <begin position="254"/>
        <end position="274"/>
    </location>
</feature>
<feature type="transmembrane region" description="Helical" evidence="2">
    <location>
        <begin position="281"/>
        <end position="301"/>
    </location>
</feature>
<feature type="transmembrane region" description="Helical" evidence="2">
    <location>
        <begin position="330"/>
        <end position="350"/>
    </location>
</feature>
<feature type="transmembrane region" description="Helical" evidence="2">
    <location>
        <begin position="421"/>
        <end position="441"/>
    </location>
</feature>
<feature type="transmembrane region" description="Helical" evidence="2">
    <location>
        <begin position="464"/>
        <end position="484"/>
    </location>
</feature>
<feature type="sequence conflict" description="In Ref. 1; BAC31945." evidence="3" ref="1">
    <original>R</original>
    <variation>T</variation>
    <location>
        <position position="53"/>
    </location>
</feature>
<feature type="sequence conflict" description="In Ref. 1; BAC31945." evidence="3" ref="1">
    <original>S</original>
    <variation>P</variation>
    <location>
        <position position="111"/>
    </location>
</feature>
<feature type="sequence conflict" description="In Ref. 1; BAC31945." evidence="3" ref="1">
    <original>L</original>
    <variation>F</variation>
    <location>
        <position position="217"/>
    </location>
</feature>